<evidence type="ECO:0000250" key="1">
    <source>
        <dbReference type="UniProtKB" id="Q96242"/>
    </source>
</evidence>
<evidence type="ECO:0000255" key="2"/>
<evidence type="ECO:0000269" key="3">
    <source>
    </source>
</evidence>
<evidence type="ECO:0000269" key="4">
    <source ref="1"/>
</evidence>
<evidence type="ECO:0000303" key="5">
    <source>
    </source>
</evidence>
<evidence type="ECO:0000303" key="6">
    <source>
    </source>
</evidence>
<evidence type="ECO:0000303" key="7">
    <source>
    </source>
</evidence>
<evidence type="ECO:0000303" key="8">
    <source>
    </source>
</evidence>
<evidence type="ECO:0000303" key="9">
    <source>
    </source>
</evidence>
<evidence type="ECO:0000303" key="10">
    <source>
    </source>
</evidence>
<evidence type="ECO:0000303" key="11">
    <source>
    </source>
</evidence>
<evidence type="ECO:0000303" key="12">
    <source>
    </source>
</evidence>
<evidence type="ECO:0000303" key="13">
    <source ref="1"/>
</evidence>
<evidence type="ECO:0000305" key="14"/>
<evidence type="ECO:0000305" key="15">
    <source ref="1"/>
</evidence>
<proteinExistence type="evidence at protein level"/>
<accession>P0DO38</accession>
<name>CP180_THYVU</name>
<dbReference type="EC" id="1.14.14.-" evidence="4"/>
<dbReference type="EC" id="1.14.14.51" evidence="4"/>
<dbReference type="EC" id="1.14.14.53" evidence="4"/>
<dbReference type="SMR" id="P0DO38"/>
<dbReference type="UniPathway" id="UPA00213"/>
<dbReference type="GO" id="GO:0016020">
    <property type="term" value="C:membrane"/>
    <property type="evidence" value="ECO:0007669"/>
    <property type="project" value="UniProtKB-SubCell"/>
</dbReference>
<dbReference type="GO" id="GO:0020037">
    <property type="term" value="F:heme binding"/>
    <property type="evidence" value="ECO:0007669"/>
    <property type="project" value="InterPro"/>
</dbReference>
<dbReference type="GO" id="GO:0005506">
    <property type="term" value="F:iron ion binding"/>
    <property type="evidence" value="ECO:0007669"/>
    <property type="project" value="InterPro"/>
</dbReference>
<dbReference type="GO" id="GO:0004497">
    <property type="term" value="F:monooxygenase activity"/>
    <property type="evidence" value="ECO:0007669"/>
    <property type="project" value="UniProtKB-KW"/>
</dbReference>
<dbReference type="GO" id="GO:0016705">
    <property type="term" value="F:oxidoreductase activity, acting on paired donors, with incorporation or reduction of molecular oxygen"/>
    <property type="evidence" value="ECO:0007669"/>
    <property type="project" value="InterPro"/>
</dbReference>
<dbReference type="GO" id="GO:0009753">
    <property type="term" value="P:response to jasmonic acid"/>
    <property type="evidence" value="ECO:0000270"/>
    <property type="project" value="UniProtKB"/>
</dbReference>
<dbReference type="GO" id="GO:0009751">
    <property type="term" value="P:response to salicylic acid"/>
    <property type="evidence" value="ECO:0000270"/>
    <property type="project" value="UniProtKB"/>
</dbReference>
<dbReference type="GO" id="GO:0010225">
    <property type="term" value="P:response to UV-C"/>
    <property type="evidence" value="ECO:0000270"/>
    <property type="project" value="UniProtKB"/>
</dbReference>
<dbReference type="GO" id="GO:0016114">
    <property type="term" value="P:terpenoid biosynthetic process"/>
    <property type="evidence" value="ECO:0007669"/>
    <property type="project" value="UniProtKB-UniPathway"/>
</dbReference>
<dbReference type="CDD" id="cd11072">
    <property type="entry name" value="CYP71-like"/>
    <property type="match status" value="1"/>
</dbReference>
<dbReference type="FunFam" id="1.10.630.10:FF:000043">
    <property type="entry name" value="Cytochrome P450 99A2"/>
    <property type="match status" value="1"/>
</dbReference>
<dbReference type="Gene3D" id="1.10.630.10">
    <property type="entry name" value="Cytochrome P450"/>
    <property type="match status" value="1"/>
</dbReference>
<dbReference type="InterPro" id="IPR052306">
    <property type="entry name" value="CYP450_71D"/>
</dbReference>
<dbReference type="InterPro" id="IPR001128">
    <property type="entry name" value="Cyt_P450"/>
</dbReference>
<dbReference type="InterPro" id="IPR017972">
    <property type="entry name" value="Cyt_P450_CS"/>
</dbReference>
<dbReference type="InterPro" id="IPR002401">
    <property type="entry name" value="Cyt_P450_E_grp-I"/>
</dbReference>
<dbReference type="InterPro" id="IPR036396">
    <property type="entry name" value="Cyt_P450_sf"/>
</dbReference>
<dbReference type="PANTHER" id="PTHR47953:SF19">
    <property type="entry name" value="OS06G0641600 PROTEIN"/>
    <property type="match status" value="1"/>
</dbReference>
<dbReference type="PANTHER" id="PTHR47953">
    <property type="entry name" value="OS08G0105600 PROTEIN"/>
    <property type="match status" value="1"/>
</dbReference>
<dbReference type="Pfam" id="PF00067">
    <property type="entry name" value="p450"/>
    <property type="match status" value="1"/>
</dbReference>
<dbReference type="PRINTS" id="PR00463">
    <property type="entry name" value="EP450I"/>
</dbReference>
<dbReference type="PRINTS" id="PR00385">
    <property type="entry name" value="P450"/>
</dbReference>
<dbReference type="SUPFAM" id="SSF48264">
    <property type="entry name" value="Cytochrome P450"/>
    <property type="match status" value="1"/>
</dbReference>
<dbReference type="PROSITE" id="PS00086">
    <property type="entry name" value="CYTOCHROME_P450"/>
    <property type="match status" value="1"/>
</dbReference>
<feature type="chain" id="PRO_0000453325" description="Cytochrome P450 71D180">
    <location>
        <begin position="1"/>
        <end position="496"/>
    </location>
</feature>
<feature type="transmembrane region" description="Helical; Signal-anchor for type II membrane protein" evidence="2">
    <location>
        <begin position="1"/>
        <end position="21"/>
    </location>
</feature>
<feature type="binding site" description="axial binding residue" evidence="1">
    <location>
        <position position="435"/>
    </location>
    <ligand>
        <name>heme</name>
        <dbReference type="ChEBI" id="CHEBI:30413"/>
    </ligand>
    <ligandPart>
        <name>Fe</name>
        <dbReference type="ChEBI" id="CHEBI:18248"/>
    </ligandPart>
</feature>
<feature type="sequence variant" description="In strain: cv. Tc." evidence="15">
    <original>R</original>
    <variation>C</variation>
    <location>
        <position position="156"/>
    </location>
</feature>
<feature type="sequence variant" description="In strain: cv. Tc." evidence="15">
    <original>F</original>
    <variation>V</variation>
    <location>
        <position position="229"/>
    </location>
</feature>
<feature type="sequence variant" description="In strain: cv. Tc." evidence="15">
    <original>I</original>
    <variation>V</variation>
    <location>
        <position position="266"/>
    </location>
</feature>
<feature type="sequence variant" description="In strain: cv. Tc." evidence="15">
    <original>I</original>
    <variation>T</variation>
    <location>
        <position position="386"/>
    </location>
</feature>
<keyword id="KW-0349">Heme</keyword>
<keyword id="KW-0408">Iron</keyword>
<keyword id="KW-0472">Membrane</keyword>
<keyword id="KW-0479">Metal-binding</keyword>
<keyword id="KW-0503">Monooxygenase</keyword>
<keyword id="KW-0560">Oxidoreductase</keyword>
<keyword id="KW-0735">Signal-anchor</keyword>
<keyword id="KW-0812">Transmembrane</keyword>
<keyword id="KW-1133">Transmembrane helix</keyword>
<gene>
    <name evidence="13" type="primary">CYP71D180</name>
</gene>
<organism>
    <name type="scientific">Thymus vulgaris</name>
    <name type="common">Thyme</name>
    <dbReference type="NCBI Taxonomy" id="49992"/>
    <lineage>
        <taxon>Eukaryota</taxon>
        <taxon>Viridiplantae</taxon>
        <taxon>Streptophyta</taxon>
        <taxon>Embryophyta</taxon>
        <taxon>Tracheophyta</taxon>
        <taxon>Spermatophyta</taxon>
        <taxon>Magnoliopsida</taxon>
        <taxon>eudicotyledons</taxon>
        <taxon>Gunneridae</taxon>
        <taxon>Pentapetalae</taxon>
        <taxon>asterids</taxon>
        <taxon>lamiids</taxon>
        <taxon>Lamiales</taxon>
        <taxon>Lamiaceae</taxon>
        <taxon>Nepetoideae</taxon>
        <taxon>Mentheae</taxon>
        <taxon>Thymus</taxon>
    </lineage>
</organism>
<comment type="function">
    <text evidence="4">Involved in the biosynthesis of phenolic monoterpenes natural products thymol and carvacrol which have a broad range of biological activities acting as antimicrobial compounds, insecticides, antioxidants and pharmaceutical agents (Ref.1). Catalyzes the C2-hydroxylation of gamma-terpinene to produce carvacrol (Ref.1). Mediates also the C6-hydroxylation of (4S)-limonene and (4R)-limonene to form carveol (Ref.1).</text>
</comment>
<comment type="catalytic activity">
    <reaction evidence="4">
        <text>(4R)-limonene + reduced [NADPH--hemoprotein reductase] + O2 = (1R,5S)-carveol + oxidized [NADPH--hemoprotein reductase] + H2O + H(+)</text>
        <dbReference type="Rhea" id="RHEA:18957"/>
        <dbReference type="Rhea" id="RHEA-COMP:11964"/>
        <dbReference type="Rhea" id="RHEA-COMP:11965"/>
        <dbReference type="ChEBI" id="CHEBI:15377"/>
        <dbReference type="ChEBI" id="CHEBI:15378"/>
        <dbReference type="ChEBI" id="CHEBI:15379"/>
        <dbReference type="ChEBI" id="CHEBI:15382"/>
        <dbReference type="ChEBI" id="CHEBI:15388"/>
        <dbReference type="ChEBI" id="CHEBI:57618"/>
        <dbReference type="ChEBI" id="CHEBI:58210"/>
        <dbReference type="EC" id="1.14.14.53"/>
    </reaction>
    <physiologicalReaction direction="left-to-right" evidence="4">
        <dbReference type="Rhea" id="RHEA:18958"/>
    </physiologicalReaction>
</comment>
<comment type="catalytic activity">
    <reaction evidence="4">
        <text>(4S)-limonene + reduced [NADPH--hemoprotein reductase] + O2 = (1S,5R)-carveol + oxidized [NADPH--hemoprotein reductase] + H2O + H(+)</text>
        <dbReference type="Rhea" id="RHEA:17945"/>
        <dbReference type="Rhea" id="RHEA-COMP:11964"/>
        <dbReference type="Rhea" id="RHEA-COMP:11965"/>
        <dbReference type="ChEBI" id="CHEBI:15377"/>
        <dbReference type="ChEBI" id="CHEBI:15378"/>
        <dbReference type="ChEBI" id="CHEBI:15379"/>
        <dbReference type="ChEBI" id="CHEBI:15383"/>
        <dbReference type="ChEBI" id="CHEBI:15389"/>
        <dbReference type="ChEBI" id="CHEBI:57618"/>
        <dbReference type="ChEBI" id="CHEBI:58210"/>
        <dbReference type="EC" id="1.14.14.51"/>
    </reaction>
    <physiologicalReaction direction="left-to-right" evidence="4">
        <dbReference type="Rhea" id="RHEA:17946"/>
    </physiologicalReaction>
</comment>
<comment type="catalytic activity">
    <reaction evidence="4">
        <text>gamma-terpinene + 2 reduced [NADPH--hemoprotein reductase] + 2 O2 = carvacrol + 2 oxidized [NADPH--hemoprotein reductase] + 3 H2O + 2 H(+)</text>
        <dbReference type="Rhea" id="RHEA:67404"/>
        <dbReference type="Rhea" id="RHEA-COMP:11964"/>
        <dbReference type="Rhea" id="RHEA-COMP:11965"/>
        <dbReference type="ChEBI" id="CHEBI:3440"/>
        <dbReference type="ChEBI" id="CHEBI:10577"/>
        <dbReference type="ChEBI" id="CHEBI:15377"/>
        <dbReference type="ChEBI" id="CHEBI:15378"/>
        <dbReference type="ChEBI" id="CHEBI:15379"/>
        <dbReference type="ChEBI" id="CHEBI:57618"/>
        <dbReference type="ChEBI" id="CHEBI:58210"/>
    </reaction>
    <physiologicalReaction direction="left-to-right" evidence="4">
        <dbReference type="Rhea" id="RHEA:67405"/>
    </physiologicalReaction>
</comment>
<comment type="cofactor">
    <cofactor evidence="1">
        <name>heme</name>
        <dbReference type="ChEBI" id="CHEBI:30413"/>
    </cofactor>
</comment>
<comment type="biophysicochemical properties">
    <kinetics>
        <KM evidence="4">40.3 uM for gamma-terpinene</KM>
        <KM evidence="4">14.1 uM for (4R)-limonene</KM>
        <KM evidence="4">0.11 uM for (4S)-limonene</KM>
        <text evidence="4">kcat is 1.24 sec(-1) with gamma-terpinene as substrate (Ref.1). kcat is 0.08 sec(-1) with (4R)-limonene as substrate (Ref.1). kcat is 0.15 sec(-1) with (4S)-limonene as substrate (Ref.1).</text>
    </kinetics>
    <phDependence>
        <text evidence="4">Optimum pH is 6.4-6.8.</text>
    </phDependence>
</comment>
<comment type="pathway">
    <text evidence="4">Secondary metabolite biosynthesis; terpenoid biosynthesis.</text>
</comment>
<comment type="subcellular location">
    <subcellularLocation>
        <location evidence="2">Membrane</location>
        <topology evidence="14">Single-pass type II membrane protein</topology>
    </subcellularLocation>
</comment>
<comment type="tissue specificity">
    <text evidence="3">Mostly expressed in flowers and, to a lower extent, in leaves, especially in glandular trichomes.</text>
</comment>
<comment type="induction">
    <text evidence="3">Induced by jasmonic acid (MeJA), salicylic acid (SA) and UV-C irradiation.</text>
</comment>
<comment type="biotechnology">
    <text evidence="6 7 10 12">The monoterpenic phenol thymol is widely used as a fragrance and a flavoring ingredient in food and cosmetic industries (PubMed:29785774). Its derivatives have also several biological and pharmacological properties such as antimicrobial, antioxidant, anticarcinogenesis, anti-inflammatory and antispasmodic activities (PubMed:29785774, PubMed:29874939). Medical applications include the treatment of disorders affecting the respiratory, nervous, and cardiovascular systems (PubMed:29785774). It may also act as a growth enhancer and immunomodulator (PubMed:29785774). Thymol may also have antiviral activity toward COVID-19 by binding to the S1 receptor binding domain of the SARS-CoV-2 spike (S) glycoprotein (PubMed:32834111, PubMed:33855010).</text>
</comment>
<comment type="biotechnology">
    <text evidence="5 7 8 9 10 11 12">The monoterpenic phenol carvacrol is commonly used as a fragrance and a food flavoring ingredient and preservative (PubMed:24915411). Its derivatives exhibit also various biological and pharmacological properties including antioxidant, antibacterial, antifungal, insecticid, nematicid, anticancer, anti-inflammatory, hepatoprotective, spasmolytic, and vasorelaxant (PubMed:24915411, PubMed:29874939, PubMed:30836858, PubMed:33664752). Phytochemical inhibitor targeting the main SARS-CoV-2 viral protease (Mpro) and ACE2 in human host cells, carvacrol is a possible candidate for treating COVID-19 (PubMed:32448034, PubMed:33664752). Carvacrol may also have antiviral activity toward COVID-19 by binding to the S1 receptor binding domain of the SARS-CoV-2 spike (S) glycoprotein (PubMed:32834111, PubMed:33855010).</text>
</comment>
<comment type="similarity">
    <text evidence="14">Belongs to the cytochrome P450 family.</text>
</comment>
<sequence length="496" mass="55809">MDISISWVVIIVFVLSYLILMDKWRASKLPGNLPPSPPKLPVIGHLHLLRGGLPQHVLRGITQKYGAVAHLQLGEVHSVVLSSAESTKQAMKVLDPTFADRFDSIGSQIMWYNNDDMIFSRYNDHWRQIRKICVSELLSPRNVRSFGFIRQDEMARLIRVFESSEGAAINASEEISKMSCAIVCRAAFGSVLKDQGKLADLVKEALSMASGFELADLYPSSWLLNLLCFNKYRLQRMRGRLDNILDGFLEEHKVKKSGEFGGEDIIDVLYRMQKDTEMKAPITNNGIKGFIFDVFSAGTETSATTIQWALSELMKNPEKMVKAQAEVREKLKGKTNPDVADVQELKYLHSVVKETLRLHPPFPLIPRLCKEECEVTGYTIPAKTRILVNVWSIGRDPAYWKDPDTFNPDRFDEVSRDVIGNDFELIPFGAGRRVCPGLHFGLANVEVPLAQLLYHFDYKLPSAMTAADMDMSETPGLSGPRKNPLIMIPTIHNPTS</sequence>
<reference key="1">
    <citation type="thesis" date="2011" institute="Friedrich Schiller University of Jena" country="Germany">
        <title>Biosynthesis of the phenolic monoterpenes, thymol and carvacrol, by terpene synthases and cytochrome P450s in oregano and thyme.</title>
        <authorList>
            <person name="Crocoll C."/>
        </authorList>
    </citation>
    <scope>NUCLEOTIDE SEQUENCE [MRNA]</scope>
    <scope>FUNCTION</scope>
    <scope>CATALYTIC ACTIVITY</scope>
    <scope>PATHWAY</scope>
    <source>
        <strain>cv. T28</strain>
        <strain>cv. Tc</strain>
        <tissue>Leaf</tissue>
        <tissue>Trichome gland</tissue>
    </source>
</reference>
<reference key="2">
    <citation type="journal article" date="2015" name="Crit. Rev. Food Sci. Nutr.">
        <title>The bioactivity and toxicological actions of carvacrol.</title>
        <authorList>
            <person name="Suntres Z.E."/>
            <person name="Coccimiglio J."/>
            <person name="Alipour M."/>
        </authorList>
    </citation>
    <scope>REVIEW ON CARVACROL</scope>
    <scope>BIOTECHNOLOGY</scope>
</reference>
<reference key="3">
    <citation type="journal article" date="2017" name="Plant Physiol. Biochem.">
        <title>Tissue-specific gene-expression patterns of genes associated with thymol/carvacrol biosynthesis in thyme (Thymus vulgaris L.) and their differential changes upon treatment with abiotic elicitors.</title>
        <authorList>
            <person name="Majdi M."/>
            <person name="Malekzadeh-Mashhady A."/>
            <person name="Maroufi A."/>
            <person name="Crocoll C."/>
        </authorList>
    </citation>
    <scope>TISSUE SPECIFICITY</scope>
    <scope>INDUCTION BY JASMONIC ACID; SALICYLIC ACID AND UV-C</scope>
</reference>
<reference key="4">
    <citation type="journal article" date="2018" name="Phytother. Res.">
        <title>Thymol, thyme, and other plant sources: Health and potential uses.</title>
        <authorList>
            <person name="Salehi B."/>
            <person name="Mishra A.P."/>
            <person name="Shukla I."/>
            <person name="Sharifi-Rad M."/>
            <person name="Contreras M.D.M."/>
            <person name="Segura-Carretero A."/>
            <person name="Fathi H."/>
            <person name="Nasrabadi N.N."/>
            <person name="Kobarfard F."/>
            <person name="Sharifi-Rad J."/>
        </authorList>
    </citation>
    <scope>REVIEW ON THYMOL</scope>
    <scope>BIOTECHNOLOGY</scope>
</reference>
<reference key="5">
    <citation type="journal article" date="2019" name="Nat. Prod. Res.">
        <title>Synthesis and antifungal activity of carvacrol and thymol esters with heteroaromatic carboxylic acids.</title>
        <authorList>
            <person name="Wang K."/>
            <person name="Jiang S."/>
            <person name="Yang Y."/>
            <person name="Fan L."/>
            <person name="Su F."/>
            <person name="Ye M."/>
        </authorList>
    </citation>
    <scope>REVIEW ON CARVACROL AND THYMOL</scope>
    <scope>BIOTECHNOLOGY</scope>
</reference>
<reference key="6">
    <citation type="journal article" date="2020" name="Front. Plant Sci.">
        <title>Carvacrol, a plant metabolite targeting viral protease (Mpro) and ACE2 in host cells can be a possible candidate for COVID-19.</title>
        <authorList>
            <person name="Javed H."/>
            <person name="Meeran M.F.N."/>
            <person name="Jha N.K."/>
            <person name="Ojha S."/>
        </authorList>
    </citation>
    <scope>REVIEW ON CARVACROL EFFECTS ON COVID-19</scope>
    <scope>BIOTECHNOLOGY</scope>
</reference>
<reference key="7">
    <citation type="journal article" date="2020" name="J. Biomol. Struct. Dyn.">
        <title>Identification of phytochemical inhibitors against main protease of COVID-19 using molecular modeling approaches.</title>
        <authorList>
            <person name="Kumar A."/>
            <person name="Choudhir G."/>
            <person name="Shukla S.K."/>
            <person name="Sharma M."/>
            <person name="Tyagi P."/>
            <person name="Bhushan A."/>
            <person name="Rathore M."/>
        </authorList>
    </citation>
    <scope>REVIEW ON CARVACROL EFFECTS ON COVID-19</scope>
    <scope>BIOTECHNOLOGY</scope>
</reference>
<reference key="8">
    <citation type="journal article" date="2020" name="J. Biomol. Struct. Dyn.">
        <title>Synthesis, anticholinesterase activity and molecular modeling studies of novel carvacrol-substituted amide derivatives.</title>
        <authorList>
            <person name="Zengin Kurt B."/>
            <person name="Durdagi S."/>
            <person name="Celebi G."/>
            <person name="Ekhteiari Salmas R."/>
            <person name="Sonmez F."/>
        </authorList>
    </citation>
    <scope>REVIEW ON CARVACROL DERIVATIVES</scope>
    <scope>BIOTECHNOLOGY</scope>
</reference>
<reference key="9">
    <citation type="journal article" date="2020" name="J. Mol. Struct.">
        <title>Computational evaluation of major components from plant essential oils as potent inhibitors of SARS-CoV-2 spike protein.</title>
        <authorList>
            <person name="Kulkarni S.A."/>
            <person name="Nagarajan S.K."/>
            <person name="Ramesh V."/>
            <person name="Palaniyandi V."/>
            <person name="Selvam S.P."/>
            <person name="Madhavan T."/>
        </authorList>
    </citation>
    <scope>REVIEW ON PLANT ESSENTIAL OILS EFFECTS ON COVID-19</scope>
    <scope>BIOTECHNOLOGY</scope>
</reference>
<reference key="10">
    <citation type="journal article" date="2021" name="Front. Chem.">
        <title>Antiviral essential oil components against SARS-CoV-2 in pre-procedural mouth rinses for dental settings during COVID-19: A computational study.</title>
        <authorList>
            <person name="Yadalam P.K."/>
            <person name="Varatharajan K."/>
            <person name="Rajapandian K."/>
            <person name="Chopra P."/>
            <person name="Arumuganainar D."/>
            <person name="Nagarathnam T."/>
            <person name="Sohn H."/>
            <person name="Madhavan T."/>
        </authorList>
    </citation>
    <scope>REVIEW ON PLANT ESSENTIAL OILS EFFECTS ON COVID-19</scope>
    <scope>BIOTECHNOLOGY</scope>
</reference>
<protein>
    <recommendedName>
        <fullName evidence="13">Cytochrome P450 71D180</fullName>
    </recommendedName>
    <alternativeName>
        <fullName evidence="15">Carvacrol synthase</fullName>
        <ecNumber evidence="4">1.14.14.-</ecNumber>
    </alternativeName>
    <alternativeName>
        <fullName evidence="15">Carveol synthase</fullName>
        <ecNumber evidence="4">1.14.14.51</ecNumber>
        <ecNumber evidence="4">1.14.14.53</ecNumber>
    </alternativeName>
    <alternativeName>
        <fullName evidence="15">Gamma-terpinene hydroxylase</fullName>
    </alternativeName>
    <alternativeName>
        <fullName evidence="15">Limonene hydroxylase</fullName>
    </alternativeName>
</protein>